<feature type="chain" id="PRO_0000160228" description="NAD-dependent malic enzyme">
    <location>
        <begin position="1"/>
        <end position="565"/>
    </location>
</feature>
<feature type="active site" description="Proton donor" evidence="1">
    <location>
        <position position="104"/>
    </location>
</feature>
<feature type="active site" description="Proton acceptor" evidence="1">
    <location>
        <position position="175"/>
    </location>
</feature>
<feature type="binding site" evidence="1">
    <location>
        <position position="157"/>
    </location>
    <ligand>
        <name>NAD(+)</name>
        <dbReference type="ChEBI" id="CHEBI:57540"/>
    </ligand>
</feature>
<feature type="binding site" evidence="1">
    <location>
        <position position="246"/>
    </location>
    <ligand>
        <name>a divalent metal cation</name>
        <dbReference type="ChEBI" id="CHEBI:60240"/>
    </ligand>
</feature>
<feature type="binding site" evidence="1">
    <location>
        <position position="247"/>
    </location>
    <ligand>
        <name>a divalent metal cation</name>
        <dbReference type="ChEBI" id="CHEBI:60240"/>
    </ligand>
</feature>
<feature type="binding site" evidence="1">
    <location>
        <position position="270"/>
    </location>
    <ligand>
        <name>a divalent metal cation</name>
        <dbReference type="ChEBI" id="CHEBI:60240"/>
    </ligand>
</feature>
<feature type="binding site" evidence="1">
    <location>
        <position position="270"/>
    </location>
    <ligand>
        <name>NAD(+)</name>
        <dbReference type="ChEBI" id="CHEBI:57540"/>
    </ligand>
</feature>
<feature type="binding site" evidence="1">
    <location>
        <position position="418"/>
    </location>
    <ligand>
        <name>NAD(+)</name>
        <dbReference type="ChEBI" id="CHEBI:57540"/>
    </ligand>
</feature>
<feature type="site" description="Important for activity" evidence="1">
    <location>
        <position position="270"/>
    </location>
</feature>
<accession>Q57P88</accession>
<proteinExistence type="inferred from homology"/>
<protein>
    <recommendedName>
        <fullName evidence="1">NAD-dependent malic enzyme</fullName>
        <shortName evidence="1">NAD-ME</shortName>
        <ecNumber evidence="1">1.1.1.38</ecNumber>
    </recommendedName>
</protein>
<dbReference type="EC" id="1.1.1.38" evidence="1"/>
<dbReference type="EMBL" id="AE017220">
    <property type="protein sequence ID" value="AAX65473.1"/>
    <property type="status" value="ALT_INIT"/>
    <property type="molecule type" value="Genomic_DNA"/>
</dbReference>
<dbReference type="RefSeq" id="WP_000450512.1">
    <property type="nucleotide sequence ID" value="NC_006905.1"/>
</dbReference>
<dbReference type="SMR" id="Q57P88"/>
<dbReference type="KEGG" id="sec:SCH_1567"/>
<dbReference type="HOGENOM" id="CLU_011405_5_2_6"/>
<dbReference type="Proteomes" id="UP000000538">
    <property type="component" value="Chromosome"/>
</dbReference>
<dbReference type="GO" id="GO:0005829">
    <property type="term" value="C:cytosol"/>
    <property type="evidence" value="ECO:0007669"/>
    <property type="project" value="TreeGrafter"/>
</dbReference>
<dbReference type="GO" id="GO:0004471">
    <property type="term" value="F:malate dehydrogenase (decarboxylating) (NAD+) activity"/>
    <property type="evidence" value="ECO:0007669"/>
    <property type="project" value="UniProtKB-UniRule"/>
</dbReference>
<dbReference type="GO" id="GO:0046872">
    <property type="term" value="F:metal ion binding"/>
    <property type="evidence" value="ECO:0007669"/>
    <property type="project" value="UniProtKB-KW"/>
</dbReference>
<dbReference type="GO" id="GO:0051287">
    <property type="term" value="F:NAD binding"/>
    <property type="evidence" value="ECO:0007669"/>
    <property type="project" value="InterPro"/>
</dbReference>
<dbReference type="GO" id="GO:0008948">
    <property type="term" value="F:oxaloacetate decarboxylase activity"/>
    <property type="evidence" value="ECO:0007669"/>
    <property type="project" value="UniProtKB-UniRule"/>
</dbReference>
<dbReference type="GO" id="GO:0006108">
    <property type="term" value="P:malate metabolic process"/>
    <property type="evidence" value="ECO:0007669"/>
    <property type="project" value="TreeGrafter"/>
</dbReference>
<dbReference type="CDD" id="cd05312">
    <property type="entry name" value="NAD_bind_1_malic_enz"/>
    <property type="match status" value="1"/>
</dbReference>
<dbReference type="FunFam" id="3.40.50.10380:FF:000001">
    <property type="entry name" value="NAD-dependent malic enzyme"/>
    <property type="match status" value="1"/>
</dbReference>
<dbReference type="FunFam" id="3.40.50.720:FF:000055">
    <property type="entry name" value="NAD-dependent malic enzyme"/>
    <property type="match status" value="1"/>
</dbReference>
<dbReference type="Gene3D" id="3.40.50.10380">
    <property type="entry name" value="Malic enzyme, N-terminal domain"/>
    <property type="match status" value="1"/>
</dbReference>
<dbReference type="Gene3D" id="3.40.50.720">
    <property type="entry name" value="NAD(P)-binding Rossmann-like Domain"/>
    <property type="match status" value="1"/>
</dbReference>
<dbReference type="HAMAP" id="MF_01619">
    <property type="entry name" value="NAD_malic_enz"/>
    <property type="match status" value="1"/>
</dbReference>
<dbReference type="InterPro" id="IPR046346">
    <property type="entry name" value="Aminoacid_DH-like_N_sf"/>
</dbReference>
<dbReference type="InterPro" id="IPR015884">
    <property type="entry name" value="Malic_enzyme_CS"/>
</dbReference>
<dbReference type="InterPro" id="IPR012301">
    <property type="entry name" value="Malic_N_dom"/>
</dbReference>
<dbReference type="InterPro" id="IPR037062">
    <property type="entry name" value="Malic_N_dom_sf"/>
</dbReference>
<dbReference type="InterPro" id="IPR012302">
    <property type="entry name" value="Malic_NAD-bd"/>
</dbReference>
<dbReference type="InterPro" id="IPR001891">
    <property type="entry name" value="Malic_OxRdtase"/>
</dbReference>
<dbReference type="InterPro" id="IPR036291">
    <property type="entry name" value="NAD(P)-bd_dom_sf"/>
</dbReference>
<dbReference type="InterPro" id="IPR023667">
    <property type="entry name" value="NAD_malic_enz_proteobac"/>
</dbReference>
<dbReference type="NCBIfam" id="NF010052">
    <property type="entry name" value="PRK13529.1"/>
    <property type="match status" value="1"/>
</dbReference>
<dbReference type="PANTHER" id="PTHR23406">
    <property type="entry name" value="MALIC ENZYME-RELATED"/>
    <property type="match status" value="1"/>
</dbReference>
<dbReference type="PANTHER" id="PTHR23406:SF34">
    <property type="entry name" value="NAD-DEPENDENT MALIC ENZYME, MITOCHONDRIAL"/>
    <property type="match status" value="1"/>
</dbReference>
<dbReference type="Pfam" id="PF00390">
    <property type="entry name" value="malic"/>
    <property type="match status" value="1"/>
</dbReference>
<dbReference type="Pfam" id="PF03949">
    <property type="entry name" value="Malic_M"/>
    <property type="match status" value="1"/>
</dbReference>
<dbReference type="PIRSF" id="PIRSF000106">
    <property type="entry name" value="ME"/>
    <property type="match status" value="1"/>
</dbReference>
<dbReference type="PRINTS" id="PR00072">
    <property type="entry name" value="MALOXRDTASE"/>
</dbReference>
<dbReference type="SMART" id="SM01274">
    <property type="entry name" value="malic"/>
    <property type="match status" value="1"/>
</dbReference>
<dbReference type="SMART" id="SM00919">
    <property type="entry name" value="Malic_M"/>
    <property type="match status" value="1"/>
</dbReference>
<dbReference type="SUPFAM" id="SSF53223">
    <property type="entry name" value="Aminoacid dehydrogenase-like, N-terminal domain"/>
    <property type="match status" value="1"/>
</dbReference>
<dbReference type="SUPFAM" id="SSF51735">
    <property type="entry name" value="NAD(P)-binding Rossmann-fold domains"/>
    <property type="match status" value="1"/>
</dbReference>
<dbReference type="PROSITE" id="PS00331">
    <property type="entry name" value="MALIC_ENZYMES"/>
    <property type="match status" value="1"/>
</dbReference>
<evidence type="ECO:0000255" key="1">
    <source>
        <dbReference type="HAMAP-Rule" id="MF_01619"/>
    </source>
</evidence>
<evidence type="ECO:0000305" key="2"/>
<comment type="catalytic activity">
    <reaction evidence="1">
        <text>(S)-malate + NAD(+) = pyruvate + CO2 + NADH</text>
        <dbReference type="Rhea" id="RHEA:12653"/>
        <dbReference type="ChEBI" id="CHEBI:15361"/>
        <dbReference type="ChEBI" id="CHEBI:15589"/>
        <dbReference type="ChEBI" id="CHEBI:16526"/>
        <dbReference type="ChEBI" id="CHEBI:57540"/>
        <dbReference type="ChEBI" id="CHEBI:57945"/>
        <dbReference type="EC" id="1.1.1.38"/>
    </reaction>
</comment>
<comment type="catalytic activity">
    <reaction evidence="1">
        <text>oxaloacetate + H(+) = pyruvate + CO2</text>
        <dbReference type="Rhea" id="RHEA:15641"/>
        <dbReference type="ChEBI" id="CHEBI:15361"/>
        <dbReference type="ChEBI" id="CHEBI:15378"/>
        <dbReference type="ChEBI" id="CHEBI:16452"/>
        <dbReference type="ChEBI" id="CHEBI:16526"/>
        <dbReference type="EC" id="1.1.1.38"/>
    </reaction>
</comment>
<comment type="cofactor">
    <cofactor evidence="1">
        <name>Mg(2+)</name>
        <dbReference type="ChEBI" id="CHEBI:18420"/>
    </cofactor>
    <cofactor evidence="1">
        <name>Mn(2+)</name>
        <dbReference type="ChEBI" id="CHEBI:29035"/>
    </cofactor>
    <text evidence="1">Divalent metal cations. Prefers magnesium or manganese.</text>
</comment>
<comment type="subunit">
    <text evidence="1">Homotetramer.</text>
</comment>
<comment type="similarity">
    <text evidence="1">Belongs to the malic enzymes family.</text>
</comment>
<comment type="sequence caution" evidence="2">
    <conflict type="erroneous initiation">
        <sequence resource="EMBL-CDS" id="AAX65473"/>
    </conflict>
</comment>
<reference key="1">
    <citation type="journal article" date="2005" name="Nucleic Acids Res.">
        <title>The genome sequence of Salmonella enterica serovar Choleraesuis, a highly invasive and resistant zoonotic pathogen.</title>
        <authorList>
            <person name="Chiu C.-H."/>
            <person name="Tang P."/>
            <person name="Chu C."/>
            <person name="Hu S."/>
            <person name="Bao Q."/>
            <person name="Yu J."/>
            <person name="Chou Y.-Y."/>
            <person name="Wang H.-S."/>
            <person name="Lee Y.-S."/>
        </authorList>
    </citation>
    <scope>NUCLEOTIDE SEQUENCE [LARGE SCALE GENOMIC DNA]</scope>
    <source>
        <strain>SC-B67</strain>
    </source>
</reference>
<sequence length="565" mass="62924">METTTKKARSLYIPYAGPVLLEFPLLNKGSAFSVEERRNFNLSGLLPEVVESIEEQAERAWLQYQGFKTEIDKHIYLRNIQDTNETLFYRLVQNHLEEMMPVIYTPTVGAACERFSEIYRRARGVFISYPNRHNMDDILQNVPNHNIKVIVVTDGERILGLGDQGIGGMGIPIGKLSLYTACGGISPAYTLPVVLDVGTNNQQLLNDPLYMGWRHPRITDDEYYAFVDEFIQAVKQRWPDILLQFEDFAQKNAMPLLTRYRDEICSFNDDIQGTAAVTVGTLIAASRAAGSQLSEQKIVFLGAGSAGCGIAEQIIAQTQREGLSEDAARQNVFMVDRFGLLTDRMPNLLPFQAKLVQKCDNLQHWDTENDVLSLLDVVRNVKPDILIGVSGQTGLFTEEIIREMHKHCPRPIVMPLSNPTSRVEATPQDIIVWTEGNALVATGSPFSPVIWKDKVYPIAQCNNAYIFPGIGLGVIASGASRITDEMLMSASETLAKHSPLVNNGEGLVLPALKDIQVVSRAIAFAVGKMAQQQGVAVKTSAEALQQAIDDNFWKPEYRDYRRTSI</sequence>
<keyword id="KW-0479">Metal-binding</keyword>
<keyword id="KW-0520">NAD</keyword>
<keyword id="KW-0560">Oxidoreductase</keyword>
<name>MAO1_SALCH</name>
<gene>
    <name evidence="1" type="primary">maeA</name>
    <name type="ordered locus">SCH_1567</name>
</gene>
<organism>
    <name type="scientific">Salmonella choleraesuis (strain SC-B67)</name>
    <dbReference type="NCBI Taxonomy" id="321314"/>
    <lineage>
        <taxon>Bacteria</taxon>
        <taxon>Pseudomonadati</taxon>
        <taxon>Pseudomonadota</taxon>
        <taxon>Gammaproteobacteria</taxon>
        <taxon>Enterobacterales</taxon>
        <taxon>Enterobacteriaceae</taxon>
        <taxon>Salmonella</taxon>
    </lineage>
</organism>